<accession>C0R3A3</accession>
<gene>
    <name evidence="1" type="primary">rpsR</name>
    <name type="ordered locus">WRi_006240</name>
</gene>
<keyword id="KW-0687">Ribonucleoprotein</keyword>
<keyword id="KW-0689">Ribosomal protein</keyword>
<keyword id="KW-0694">RNA-binding</keyword>
<keyword id="KW-0699">rRNA-binding</keyword>
<sequence length="91" mass="10601">MMKRRNSFNNSYVSVNNRTGFRRSKVCPLAASKDEDIDYKNIDLLSKFTSDYGRILPRRLTGVCAKKQRKLRLAIIRARFLALIPYCTKKV</sequence>
<evidence type="ECO:0000255" key="1">
    <source>
        <dbReference type="HAMAP-Rule" id="MF_00270"/>
    </source>
</evidence>
<evidence type="ECO:0000305" key="2"/>
<organism>
    <name type="scientific">Wolbachia sp. subsp. Drosophila simulans (strain wRi)</name>
    <dbReference type="NCBI Taxonomy" id="66084"/>
    <lineage>
        <taxon>Bacteria</taxon>
        <taxon>Pseudomonadati</taxon>
        <taxon>Pseudomonadota</taxon>
        <taxon>Alphaproteobacteria</taxon>
        <taxon>Rickettsiales</taxon>
        <taxon>Anaplasmataceae</taxon>
        <taxon>Wolbachieae</taxon>
        <taxon>Wolbachia</taxon>
    </lineage>
</organism>
<reference key="1">
    <citation type="journal article" date="2009" name="Proc. Natl. Acad. Sci. U.S.A.">
        <title>The mosaic genome structure of the Wolbachia wRi strain infecting Drosophila simulans.</title>
        <authorList>
            <person name="Klasson L."/>
            <person name="Westberg J."/>
            <person name="Sapountzis P."/>
            <person name="Naeslund K."/>
            <person name="Lutnaes Y."/>
            <person name="Darby A.C."/>
            <person name="Veneti Z."/>
            <person name="Chen L."/>
            <person name="Braig H.R."/>
            <person name="Garrett R."/>
            <person name="Bourtzis K."/>
            <person name="Andersson S.G."/>
        </authorList>
    </citation>
    <scope>NUCLEOTIDE SEQUENCE [LARGE SCALE GENOMIC DNA]</scope>
    <source>
        <strain>wRi</strain>
    </source>
</reference>
<feature type="chain" id="PRO_1000196540" description="Small ribosomal subunit protein bS18">
    <location>
        <begin position="1"/>
        <end position="91"/>
    </location>
</feature>
<comment type="function">
    <text evidence="1">Binds as a heterodimer with protein bS6 to the central domain of the 16S rRNA, where it helps stabilize the platform of the 30S subunit.</text>
</comment>
<comment type="subunit">
    <text evidence="1">Part of the 30S ribosomal subunit. Forms a tight heterodimer with protein bS6.</text>
</comment>
<comment type="similarity">
    <text evidence="1">Belongs to the bacterial ribosomal protein bS18 family.</text>
</comment>
<proteinExistence type="inferred from homology"/>
<name>RS18_WOLWR</name>
<protein>
    <recommendedName>
        <fullName evidence="1">Small ribosomal subunit protein bS18</fullName>
    </recommendedName>
    <alternativeName>
        <fullName evidence="2">30S ribosomal protein S18</fullName>
    </alternativeName>
</protein>
<dbReference type="EMBL" id="CP001391">
    <property type="protein sequence ID" value="ACN95395.1"/>
    <property type="molecule type" value="Genomic_DNA"/>
</dbReference>
<dbReference type="RefSeq" id="WP_007548890.1">
    <property type="nucleotide sequence ID" value="NZ_MKIF01000018.1"/>
</dbReference>
<dbReference type="SMR" id="C0R3A3"/>
<dbReference type="STRING" id="66084.WRi_006240"/>
<dbReference type="GeneID" id="70036261"/>
<dbReference type="KEGG" id="wri:WRi_006240"/>
<dbReference type="HOGENOM" id="CLU_148710_2_1_5"/>
<dbReference type="Proteomes" id="UP000001293">
    <property type="component" value="Chromosome"/>
</dbReference>
<dbReference type="GO" id="GO:0022627">
    <property type="term" value="C:cytosolic small ribosomal subunit"/>
    <property type="evidence" value="ECO:0007669"/>
    <property type="project" value="TreeGrafter"/>
</dbReference>
<dbReference type="GO" id="GO:0070181">
    <property type="term" value="F:small ribosomal subunit rRNA binding"/>
    <property type="evidence" value="ECO:0007669"/>
    <property type="project" value="TreeGrafter"/>
</dbReference>
<dbReference type="GO" id="GO:0003735">
    <property type="term" value="F:structural constituent of ribosome"/>
    <property type="evidence" value="ECO:0007669"/>
    <property type="project" value="InterPro"/>
</dbReference>
<dbReference type="GO" id="GO:0006412">
    <property type="term" value="P:translation"/>
    <property type="evidence" value="ECO:0007669"/>
    <property type="project" value="UniProtKB-UniRule"/>
</dbReference>
<dbReference type="Gene3D" id="4.10.640.10">
    <property type="entry name" value="Ribosomal protein S18"/>
    <property type="match status" value="1"/>
</dbReference>
<dbReference type="HAMAP" id="MF_00270">
    <property type="entry name" value="Ribosomal_bS18"/>
    <property type="match status" value="1"/>
</dbReference>
<dbReference type="InterPro" id="IPR001648">
    <property type="entry name" value="Ribosomal_bS18"/>
</dbReference>
<dbReference type="InterPro" id="IPR018275">
    <property type="entry name" value="Ribosomal_bS18_CS"/>
</dbReference>
<dbReference type="InterPro" id="IPR036870">
    <property type="entry name" value="Ribosomal_bS18_sf"/>
</dbReference>
<dbReference type="NCBIfam" id="TIGR00165">
    <property type="entry name" value="S18"/>
    <property type="match status" value="1"/>
</dbReference>
<dbReference type="PANTHER" id="PTHR13479">
    <property type="entry name" value="30S RIBOSOMAL PROTEIN S18"/>
    <property type="match status" value="1"/>
</dbReference>
<dbReference type="PANTHER" id="PTHR13479:SF40">
    <property type="entry name" value="SMALL RIBOSOMAL SUBUNIT PROTEIN BS18M"/>
    <property type="match status" value="1"/>
</dbReference>
<dbReference type="Pfam" id="PF01084">
    <property type="entry name" value="Ribosomal_S18"/>
    <property type="match status" value="1"/>
</dbReference>
<dbReference type="PRINTS" id="PR00974">
    <property type="entry name" value="RIBOSOMALS18"/>
</dbReference>
<dbReference type="SUPFAM" id="SSF46911">
    <property type="entry name" value="Ribosomal protein S18"/>
    <property type="match status" value="1"/>
</dbReference>
<dbReference type="PROSITE" id="PS00057">
    <property type="entry name" value="RIBOSOMAL_S18"/>
    <property type="match status" value="1"/>
</dbReference>